<protein>
    <recommendedName>
        <fullName evidence="1">Bifunctional protein GlmU</fullName>
    </recommendedName>
    <domain>
        <recommendedName>
            <fullName evidence="1">UDP-N-acetylglucosamine pyrophosphorylase</fullName>
            <ecNumber evidence="1">2.7.7.23</ecNumber>
        </recommendedName>
        <alternativeName>
            <fullName evidence="1">N-acetylglucosamine-1-phosphate uridyltransferase</fullName>
        </alternativeName>
    </domain>
    <domain>
        <recommendedName>
            <fullName evidence="1">Glucosamine-1-phosphate N-acetyltransferase</fullName>
            <ecNumber evidence="1">2.3.1.157</ecNumber>
        </recommendedName>
    </domain>
</protein>
<feature type="chain" id="PRO_0000263116" description="Bifunctional protein GlmU">
    <location>
        <begin position="1"/>
        <end position="469"/>
    </location>
</feature>
<feature type="region of interest" description="Pyrophosphorylase" evidence="1">
    <location>
        <begin position="1"/>
        <end position="237"/>
    </location>
</feature>
<feature type="region of interest" description="Linker" evidence="1">
    <location>
        <begin position="238"/>
        <end position="258"/>
    </location>
</feature>
<feature type="region of interest" description="N-acetyltransferase" evidence="1">
    <location>
        <begin position="259"/>
        <end position="469"/>
    </location>
</feature>
<feature type="active site" description="Proton acceptor" evidence="1">
    <location>
        <position position="371"/>
    </location>
</feature>
<feature type="binding site" evidence="1">
    <location>
        <begin position="12"/>
        <end position="15"/>
    </location>
    <ligand>
        <name>UDP-N-acetyl-alpha-D-glucosamine</name>
        <dbReference type="ChEBI" id="CHEBI:57705"/>
    </ligand>
</feature>
<feature type="binding site" evidence="1">
    <location>
        <position position="26"/>
    </location>
    <ligand>
        <name>UDP-N-acetyl-alpha-D-glucosamine</name>
        <dbReference type="ChEBI" id="CHEBI:57705"/>
    </ligand>
</feature>
<feature type="binding site" evidence="1">
    <location>
        <position position="78"/>
    </location>
    <ligand>
        <name>UDP-N-acetyl-alpha-D-glucosamine</name>
        <dbReference type="ChEBI" id="CHEBI:57705"/>
    </ligand>
</feature>
<feature type="binding site" evidence="1">
    <location>
        <begin position="83"/>
        <end position="84"/>
    </location>
    <ligand>
        <name>UDP-N-acetyl-alpha-D-glucosamine</name>
        <dbReference type="ChEBI" id="CHEBI:57705"/>
    </ligand>
</feature>
<feature type="binding site" evidence="1">
    <location>
        <begin position="105"/>
        <end position="107"/>
    </location>
    <ligand>
        <name>UDP-N-acetyl-alpha-D-glucosamine</name>
        <dbReference type="ChEBI" id="CHEBI:57705"/>
    </ligand>
</feature>
<feature type="binding site" evidence="1">
    <location>
        <position position="107"/>
    </location>
    <ligand>
        <name>Mg(2+)</name>
        <dbReference type="ChEBI" id="CHEBI:18420"/>
    </ligand>
</feature>
<feature type="binding site" evidence="1">
    <location>
        <position position="144"/>
    </location>
    <ligand>
        <name>UDP-N-acetyl-alpha-D-glucosamine</name>
        <dbReference type="ChEBI" id="CHEBI:57705"/>
    </ligand>
</feature>
<feature type="binding site" evidence="1">
    <location>
        <position position="162"/>
    </location>
    <ligand>
        <name>UDP-N-acetyl-alpha-D-glucosamine</name>
        <dbReference type="ChEBI" id="CHEBI:57705"/>
    </ligand>
</feature>
<feature type="binding site" evidence="1">
    <location>
        <position position="177"/>
    </location>
    <ligand>
        <name>UDP-N-acetyl-alpha-D-glucosamine</name>
        <dbReference type="ChEBI" id="CHEBI:57705"/>
    </ligand>
</feature>
<feature type="binding site" evidence="1">
    <location>
        <position position="235"/>
    </location>
    <ligand>
        <name>Mg(2+)</name>
        <dbReference type="ChEBI" id="CHEBI:18420"/>
    </ligand>
</feature>
<feature type="binding site" evidence="1">
    <location>
        <position position="235"/>
    </location>
    <ligand>
        <name>UDP-N-acetyl-alpha-D-glucosamine</name>
        <dbReference type="ChEBI" id="CHEBI:57705"/>
    </ligand>
</feature>
<feature type="binding site" evidence="1">
    <location>
        <position position="341"/>
    </location>
    <ligand>
        <name>UDP-N-acetyl-alpha-D-glucosamine</name>
        <dbReference type="ChEBI" id="CHEBI:57705"/>
    </ligand>
</feature>
<feature type="binding site" evidence="1">
    <location>
        <position position="359"/>
    </location>
    <ligand>
        <name>UDP-N-acetyl-alpha-D-glucosamine</name>
        <dbReference type="ChEBI" id="CHEBI:57705"/>
    </ligand>
</feature>
<feature type="binding site" evidence="1">
    <location>
        <position position="374"/>
    </location>
    <ligand>
        <name>UDP-N-acetyl-alpha-D-glucosamine</name>
        <dbReference type="ChEBI" id="CHEBI:57705"/>
    </ligand>
</feature>
<feature type="binding site" evidence="1">
    <location>
        <position position="385"/>
    </location>
    <ligand>
        <name>UDP-N-acetyl-alpha-D-glucosamine</name>
        <dbReference type="ChEBI" id="CHEBI:57705"/>
    </ligand>
</feature>
<feature type="binding site" evidence="1">
    <location>
        <position position="388"/>
    </location>
    <ligand>
        <name>acetyl-CoA</name>
        <dbReference type="ChEBI" id="CHEBI:57288"/>
    </ligand>
</feature>
<feature type="binding site" evidence="1">
    <location>
        <begin position="394"/>
        <end position="395"/>
    </location>
    <ligand>
        <name>acetyl-CoA</name>
        <dbReference type="ChEBI" id="CHEBI:57288"/>
    </ligand>
</feature>
<feature type="binding site" evidence="1">
    <location>
        <position position="413"/>
    </location>
    <ligand>
        <name>acetyl-CoA</name>
        <dbReference type="ChEBI" id="CHEBI:57288"/>
    </ligand>
</feature>
<feature type="binding site" evidence="1">
    <location>
        <position position="431"/>
    </location>
    <ligand>
        <name>acetyl-CoA</name>
        <dbReference type="ChEBI" id="CHEBI:57288"/>
    </ligand>
</feature>
<feature type="binding site" evidence="1">
    <location>
        <position position="448"/>
    </location>
    <ligand>
        <name>acetyl-CoA</name>
        <dbReference type="ChEBI" id="CHEBI:57288"/>
    </ligand>
</feature>
<name>GLMU_KORVE</name>
<proteinExistence type="inferred from homology"/>
<comment type="function">
    <text evidence="1">Catalyzes the last two sequential reactions in the de novo biosynthetic pathway for UDP-N-acetylglucosamine (UDP-GlcNAc). The C-terminal domain catalyzes the transfer of acetyl group from acetyl coenzyme A to glucosamine-1-phosphate (GlcN-1-P) to produce N-acetylglucosamine-1-phosphate (GlcNAc-1-P), which is converted into UDP-GlcNAc by the transfer of uridine 5-monophosphate (from uridine 5-triphosphate), a reaction catalyzed by the N-terminal domain.</text>
</comment>
<comment type="catalytic activity">
    <reaction evidence="1">
        <text>alpha-D-glucosamine 1-phosphate + acetyl-CoA = N-acetyl-alpha-D-glucosamine 1-phosphate + CoA + H(+)</text>
        <dbReference type="Rhea" id="RHEA:13725"/>
        <dbReference type="ChEBI" id="CHEBI:15378"/>
        <dbReference type="ChEBI" id="CHEBI:57287"/>
        <dbReference type="ChEBI" id="CHEBI:57288"/>
        <dbReference type="ChEBI" id="CHEBI:57776"/>
        <dbReference type="ChEBI" id="CHEBI:58516"/>
        <dbReference type="EC" id="2.3.1.157"/>
    </reaction>
</comment>
<comment type="catalytic activity">
    <reaction evidence="1">
        <text>N-acetyl-alpha-D-glucosamine 1-phosphate + UTP + H(+) = UDP-N-acetyl-alpha-D-glucosamine + diphosphate</text>
        <dbReference type="Rhea" id="RHEA:13509"/>
        <dbReference type="ChEBI" id="CHEBI:15378"/>
        <dbReference type="ChEBI" id="CHEBI:33019"/>
        <dbReference type="ChEBI" id="CHEBI:46398"/>
        <dbReference type="ChEBI" id="CHEBI:57705"/>
        <dbReference type="ChEBI" id="CHEBI:57776"/>
        <dbReference type="EC" id="2.7.7.23"/>
    </reaction>
</comment>
<comment type="cofactor">
    <cofactor evidence="1">
        <name>Mg(2+)</name>
        <dbReference type="ChEBI" id="CHEBI:18420"/>
    </cofactor>
    <text evidence="1">Binds 1 Mg(2+) ion per subunit.</text>
</comment>
<comment type="pathway">
    <text evidence="1">Nucleotide-sugar biosynthesis; UDP-N-acetyl-alpha-D-glucosamine biosynthesis; N-acetyl-alpha-D-glucosamine 1-phosphate from alpha-D-glucosamine 6-phosphate (route II): step 2/2.</text>
</comment>
<comment type="pathway">
    <text evidence="1">Nucleotide-sugar biosynthesis; UDP-N-acetyl-alpha-D-glucosamine biosynthesis; UDP-N-acetyl-alpha-D-glucosamine from N-acetyl-alpha-D-glucosamine 1-phosphate: step 1/1.</text>
</comment>
<comment type="pathway">
    <text evidence="1">Bacterial outer membrane biogenesis; LPS lipid A biosynthesis.</text>
</comment>
<comment type="subunit">
    <text evidence="1">Homotrimer.</text>
</comment>
<comment type="subcellular location">
    <subcellularLocation>
        <location evidence="1">Cytoplasm</location>
    </subcellularLocation>
</comment>
<comment type="similarity">
    <text evidence="1">In the N-terminal section; belongs to the N-acetylglucosamine-1-phosphate uridyltransferase family.</text>
</comment>
<comment type="similarity">
    <text evidence="1">In the C-terminal section; belongs to the transferase hexapeptide repeat family.</text>
</comment>
<accession>Q1IQY5</accession>
<gene>
    <name evidence="1" type="primary">glmU</name>
    <name type="ordered locus">Acid345_1714</name>
</gene>
<keyword id="KW-0012">Acyltransferase</keyword>
<keyword id="KW-0133">Cell shape</keyword>
<keyword id="KW-0961">Cell wall biogenesis/degradation</keyword>
<keyword id="KW-0963">Cytoplasm</keyword>
<keyword id="KW-0460">Magnesium</keyword>
<keyword id="KW-0479">Metal-binding</keyword>
<keyword id="KW-0511">Multifunctional enzyme</keyword>
<keyword id="KW-0548">Nucleotidyltransferase</keyword>
<keyword id="KW-0573">Peptidoglycan synthesis</keyword>
<keyword id="KW-1185">Reference proteome</keyword>
<keyword id="KW-0677">Repeat</keyword>
<keyword id="KW-0808">Transferase</keyword>
<sequence>MTTNRKFAIAILAAGKGTRLKSKHPKVLHEIAGKPLLDHVVAAAAKVVPPSQIFAIIGHEADRVREAMQASGIQFVEQKEQRGTGHAILQTRDALKDFDDVLVLSGDVPLIRTDTVERLFAFHREHAAAMTILTTEPPDPFGYGRVFRKHAGQSDEVDRIVEQKQLTPEQARNREINSGIYAFRVQPLFANLDKLTTDNPHGEYYLTDMAAILGGASEKVVAIRADDSHEVLGVNTRQDLASLDAHLRLQKCQQLMSAGVSIFKPETCMIDSDVEVGPDTIIEPFVQLLGNTKIGADCHIKSYTVISNSTIGDGVLLRHGCIVDSSKVAARALLGPYCHLRPASDIGEEAHIGNFVETKKTRVGKGSKANHLTYLGDTEIGTGVNIGAGTITCNYDGVNKFGTIIGDNVFVGSDTTLVAPIELGKGSYIGAGSCITENVPDDALAIGRGRQVVKEGWATKKRAEQKKKK</sequence>
<evidence type="ECO:0000255" key="1">
    <source>
        <dbReference type="HAMAP-Rule" id="MF_01631"/>
    </source>
</evidence>
<reference key="1">
    <citation type="journal article" date="2009" name="Appl. Environ. Microbiol.">
        <title>Three genomes from the phylum Acidobacteria provide insight into the lifestyles of these microorganisms in soils.</title>
        <authorList>
            <person name="Ward N.L."/>
            <person name="Challacombe J.F."/>
            <person name="Janssen P.H."/>
            <person name="Henrissat B."/>
            <person name="Coutinho P.M."/>
            <person name="Wu M."/>
            <person name="Xie G."/>
            <person name="Haft D.H."/>
            <person name="Sait M."/>
            <person name="Badger J."/>
            <person name="Barabote R.D."/>
            <person name="Bradley B."/>
            <person name="Brettin T.S."/>
            <person name="Brinkac L.M."/>
            <person name="Bruce D."/>
            <person name="Creasy T."/>
            <person name="Daugherty S.C."/>
            <person name="Davidsen T.M."/>
            <person name="DeBoy R.T."/>
            <person name="Detter J.C."/>
            <person name="Dodson R.J."/>
            <person name="Durkin A.S."/>
            <person name="Ganapathy A."/>
            <person name="Gwinn-Giglio M."/>
            <person name="Han C.S."/>
            <person name="Khouri H."/>
            <person name="Kiss H."/>
            <person name="Kothari S.P."/>
            <person name="Madupu R."/>
            <person name="Nelson K.E."/>
            <person name="Nelson W.C."/>
            <person name="Paulsen I."/>
            <person name="Penn K."/>
            <person name="Ren Q."/>
            <person name="Rosovitz M.J."/>
            <person name="Selengut J.D."/>
            <person name="Shrivastava S."/>
            <person name="Sullivan S.A."/>
            <person name="Tapia R."/>
            <person name="Thompson L.S."/>
            <person name="Watkins K.L."/>
            <person name="Yang Q."/>
            <person name="Yu C."/>
            <person name="Zafar N."/>
            <person name="Zhou L."/>
            <person name="Kuske C.R."/>
        </authorList>
    </citation>
    <scope>NUCLEOTIDE SEQUENCE [LARGE SCALE GENOMIC DNA]</scope>
    <source>
        <strain>Ellin345</strain>
    </source>
</reference>
<dbReference type="EC" id="2.7.7.23" evidence="1"/>
<dbReference type="EC" id="2.3.1.157" evidence="1"/>
<dbReference type="EMBL" id="CP000360">
    <property type="protein sequence ID" value="ABF40715.1"/>
    <property type="molecule type" value="Genomic_DNA"/>
</dbReference>
<dbReference type="RefSeq" id="WP_011522517.1">
    <property type="nucleotide sequence ID" value="NC_008009.1"/>
</dbReference>
<dbReference type="SMR" id="Q1IQY5"/>
<dbReference type="STRING" id="204669.Acid345_1714"/>
<dbReference type="EnsemblBacteria" id="ABF40715">
    <property type="protein sequence ID" value="ABF40715"/>
    <property type="gene ID" value="Acid345_1714"/>
</dbReference>
<dbReference type="KEGG" id="aba:Acid345_1714"/>
<dbReference type="eggNOG" id="COG1207">
    <property type="taxonomic scope" value="Bacteria"/>
</dbReference>
<dbReference type="HOGENOM" id="CLU_029499_15_2_0"/>
<dbReference type="OrthoDB" id="9775031at2"/>
<dbReference type="UniPathway" id="UPA00113">
    <property type="reaction ID" value="UER00532"/>
</dbReference>
<dbReference type="UniPathway" id="UPA00113">
    <property type="reaction ID" value="UER00533"/>
</dbReference>
<dbReference type="UniPathway" id="UPA00973"/>
<dbReference type="Proteomes" id="UP000002432">
    <property type="component" value="Chromosome"/>
</dbReference>
<dbReference type="GO" id="GO:0005737">
    <property type="term" value="C:cytoplasm"/>
    <property type="evidence" value="ECO:0007669"/>
    <property type="project" value="UniProtKB-SubCell"/>
</dbReference>
<dbReference type="GO" id="GO:0016020">
    <property type="term" value="C:membrane"/>
    <property type="evidence" value="ECO:0007669"/>
    <property type="project" value="GOC"/>
</dbReference>
<dbReference type="GO" id="GO:0019134">
    <property type="term" value="F:glucosamine-1-phosphate N-acetyltransferase activity"/>
    <property type="evidence" value="ECO:0007669"/>
    <property type="project" value="UniProtKB-UniRule"/>
</dbReference>
<dbReference type="GO" id="GO:0000287">
    <property type="term" value="F:magnesium ion binding"/>
    <property type="evidence" value="ECO:0007669"/>
    <property type="project" value="UniProtKB-UniRule"/>
</dbReference>
<dbReference type="GO" id="GO:0003977">
    <property type="term" value="F:UDP-N-acetylglucosamine diphosphorylase activity"/>
    <property type="evidence" value="ECO:0007669"/>
    <property type="project" value="UniProtKB-UniRule"/>
</dbReference>
<dbReference type="GO" id="GO:0000902">
    <property type="term" value="P:cell morphogenesis"/>
    <property type="evidence" value="ECO:0007669"/>
    <property type="project" value="UniProtKB-UniRule"/>
</dbReference>
<dbReference type="GO" id="GO:0071555">
    <property type="term" value="P:cell wall organization"/>
    <property type="evidence" value="ECO:0007669"/>
    <property type="project" value="UniProtKB-KW"/>
</dbReference>
<dbReference type="GO" id="GO:0009245">
    <property type="term" value="P:lipid A biosynthetic process"/>
    <property type="evidence" value="ECO:0007669"/>
    <property type="project" value="UniProtKB-UniRule"/>
</dbReference>
<dbReference type="GO" id="GO:0009252">
    <property type="term" value="P:peptidoglycan biosynthetic process"/>
    <property type="evidence" value="ECO:0007669"/>
    <property type="project" value="UniProtKB-UniRule"/>
</dbReference>
<dbReference type="GO" id="GO:0008360">
    <property type="term" value="P:regulation of cell shape"/>
    <property type="evidence" value="ECO:0007669"/>
    <property type="project" value="UniProtKB-KW"/>
</dbReference>
<dbReference type="GO" id="GO:0006048">
    <property type="term" value="P:UDP-N-acetylglucosamine biosynthetic process"/>
    <property type="evidence" value="ECO:0007669"/>
    <property type="project" value="UniProtKB-UniPathway"/>
</dbReference>
<dbReference type="CDD" id="cd02540">
    <property type="entry name" value="GT2_GlmU_N_bac"/>
    <property type="match status" value="1"/>
</dbReference>
<dbReference type="CDD" id="cd03353">
    <property type="entry name" value="LbH_GlmU_C"/>
    <property type="match status" value="1"/>
</dbReference>
<dbReference type="Gene3D" id="2.160.10.10">
    <property type="entry name" value="Hexapeptide repeat proteins"/>
    <property type="match status" value="1"/>
</dbReference>
<dbReference type="Gene3D" id="3.90.550.10">
    <property type="entry name" value="Spore Coat Polysaccharide Biosynthesis Protein SpsA, Chain A"/>
    <property type="match status" value="1"/>
</dbReference>
<dbReference type="HAMAP" id="MF_01631">
    <property type="entry name" value="GlmU"/>
    <property type="match status" value="1"/>
</dbReference>
<dbReference type="InterPro" id="IPR005882">
    <property type="entry name" value="Bifunctional_GlmU"/>
</dbReference>
<dbReference type="InterPro" id="IPR050065">
    <property type="entry name" value="GlmU-like"/>
</dbReference>
<dbReference type="InterPro" id="IPR038009">
    <property type="entry name" value="GlmU_C_LbH"/>
</dbReference>
<dbReference type="InterPro" id="IPR001451">
    <property type="entry name" value="Hexapep"/>
</dbReference>
<dbReference type="InterPro" id="IPR018357">
    <property type="entry name" value="Hexapep_transf_CS"/>
</dbReference>
<dbReference type="InterPro" id="IPR025877">
    <property type="entry name" value="MobA-like_NTP_Trfase"/>
</dbReference>
<dbReference type="InterPro" id="IPR029044">
    <property type="entry name" value="Nucleotide-diphossugar_trans"/>
</dbReference>
<dbReference type="InterPro" id="IPR011004">
    <property type="entry name" value="Trimer_LpxA-like_sf"/>
</dbReference>
<dbReference type="NCBIfam" id="TIGR01173">
    <property type="entry name" value="glmU"/>
    <property type="match status" value="1"/>
</dbReference>
<dbReference type="PANTHER" id="PTHR43584:SF3">
    <property type="entry name" value="BIFUNCTIONAL PROTEIN GLMU"/>
    <property type="match status" value="1"/>
</dbReference>
<dbReference type="PANTHER" id="PTHR43584">
    <property type="entry name" value="NUCLEOTIDYL TRANSFERASE"/>
    <property type="match status" value="1"/>
</dbReference>
<dbReference type="Pfam" id="PF00132">
    <property type="entry name" value="Hexapep"/>
    <property type="match status" value="2"/>
</dbReference>
<dbReference type="Pfam" id="PF12804">
    <property type="entry name" value="NTP_transf_3"/>
    <property type="match status" value="1"/>
</dbReference>
<dbReference type="SUPFAM" id="SSF53448">
    <property type="entry name" value="Nucleotide-diphospho-sugar transferases"/>
    <property type="match status" value="1"/>
</dbReference>
<dbReference type="SUPFAM" id="SSF51161">
    <property type="entry name" value="Trimeric LpxA-like enzymes"/>
    <property type="match status" value="1"/>
</dbReference>
<dbReference type="PROSITE" id="PS00101">
    <property type="entry name" value="HEXAPEP_TRANSFERASES"/>
    <property type="match status" value="1"/>
</dbReference>
<organism>
    <name type="scientific">Koribacter versatilis (strain Ellin345)</name>
    <dbReference type="NCBI Taxonomy" id="204669"/>
    <lineage>
        <taxon>Bacteria</taxon>
        <taxon>Pseudomonadati</taxon>
        <taxon>Acidobacteriota</taxon>
        <taxon>Terriglobia</taxon>
        <taxon>Terriglobales</taxon>
        <taxon>Candidatus Korobacteraceae</taxon>
        <taxon>Candidatus Korobacter</taxon>
    </lineage>
</organism>